<accession>B2U793</accession>
<gene>
    <name evidence="1" type="primary">htpX</name>
    <name type="ordered locus">Rpic_3675</name>
</gene>
<keyword id="KW-0997">Cell inner membrane</keyword>
<keyword id="KW-1003">Cell membrane</keyword>
<keyword id="KW-0378">Hydrolase</keyword>
<keyword id="KW-0472">Membrane</keyword>
<keyword id="KW-0479">Metal-binding</keyword>
<keyword id="KW-0482">Metalloprotease</keyword>
<keyword id="KW-0645">Protease</keyword>
<keyword id="KW-0812">Transmembrane</keyword>
<keyword id="KW-1133">Transmembrane helix</keyword>
<keyword id="KW-0862">Zinc</keyword>
<feature type="chain" id="PRO_1000098835" description="Protease HtpX homolog">
    <location>
        <begin position="1"/>
        <end position="286"/>
    </location>
</feature>
<feature type="transmembrane region" description="Helical" evidence="1">
    <location>
        <begin position="7"/>
        <end position="27"/>
    </location>
</feature>
<feature type="transmembrane region" description="Helical" evidence="1">
    <location>
        <begin position="29"/>
        <end position="49"/>
    </location>
</feature>
<feature type="transmembrane region" description="Helical" evidence="1">
    <location>
        <begin position="146"/>
        <end position="166"/>
    </location>
</feature>
<feature type="transmembrane region" description="Helical" evidence="1">
    <location>
        <begin position="177"/>
        <end position="197"/>
    </location>
</feature>
<feature type="active site" evidence="1">
    <location>
        <position position="132"/>
    </location>
</feature>
<feature type="binding site" evidence="1">
    <location>
        <position position="131"/>
    </location>
    <ligand>
        <name>Zn(2+)</name>
        <dbReference type="ChEBI" id="CHEBI:29105"/>
        <note>catalytic</note>
    </ligand>
</feature>
<feature type="binding site" evidence="1">
    <location>
        <position position="135"/>
    </location>
    <ligand>
        <name>Zn(2+)</name>
        <dbReference type="ChEBI" id="CHEBI:29105"/>
        <note>catalytic</note>
    </ligand>
</feature>
<feature type="binding site" evidence="1">
    <location>
        <position position="202"/>
    </location>
    <ligand>
        <name>Zn(2+)</name>
        <dbReference type="ChEBI" id="CHEBI:29105"/>
        <note>catalytic</note>
    </ligand>
</feature>
<comment type="cofactor">
    <cofactor evidence="1">
        <name>Zn(2+)</name>
        <dbReference type="ChEBI" id="CHEBI:29105"/>
    </cofactor>
    <text evidence="1">Binds 1 zinc ion per subunit.</text>
</comment>
<comment type="subcellular location">
    <subcellularLocation>
        <location evidence="1">Cell inner membrane</location>
        <topology evidence="1">Multi-pass membrane protein</topology>
    </subcellularLocation>
</comment>
<comment type="similarity">
    <text evidence="1">Belongs to the peptidase M48B family.</text>
</comment>
<organism>
    <name type="scientific">Ralstonia pickettii (strain 12J)</name>
    <dbReference type="NCBI Taxonomy" id="402626"/>
    <lineage>
        <taxon>Bacteria</taxon>
        <taxon>Pseudomonadati</taxon>
        <taxon>Pseudomonadota</taxon>
        <taxon>Betaproteobacteria</taxon>
        <taxon>Burkholderiales</taxon>
        <taxon>Burkholderiaceae</taxon>
        <taxon>Ralstonia</taxon>
    </lineage>
</organism>
<dbReference type="EC" id="3.4.24.-" evidence="1"/>
<dbReference type="EMBL" id="CP001068">
    <property type="protein sequence ID" value="ACD28793.1"/>
    <property type="molecule type" value="Genomic_DNA"/>
</dbReference>
<dbReference type="SMR" id="B2U793"/>
<dbReference type="STRING" id="402626.Rpic_3675"/>
<dbReference type="KEGG" id="rpi:Rpic_3675"/>
<dbReference type="PATRIC" id="fig|402626.5.peg.4812"/>
<dbReference type="eggNOG" id="COG0501">
    <property type="taxonomic scope" value="Bacteria"/>
</dbReference>
<dbReference type="HOGENOM" id="CLU_042266_3_0_4"/>
<dbReference type="GO" id="GO:0005886">
    <property type="term" value="C:plasma membrane"/>
    <property type="evidence" value="ECO:0007669"/>
    <property type="project" value="UniProtKB-SubCell"/>
</dbReference>
<dbReference type="GO" id="GO:0004222">
    <property type="term" value="F:metalloendopeptidase activity"/>
    <property type="evidence" value="ECO:0007669"/>
    <property type="project" value="UniProtKB-UniRule"/>
</dbReference>
<dbReference type="GO" id="GO:0008270">
    <property type="term" value="F:zinc ion binding"/>
    <property type="evidence" value="ECO:0007669"/>
    <property type="project" value="UniProtKB-UniRule"/>
</dbReference>
<dbReference type="GO" id="GO:0006508">
    <property type="term" value="P:proteolysis"/>
    <property type="evidence" value="ECO:0007669"/>
    <property type="project" value="UniProtKB-KW"/>
</dbReference>
<dbReference type="CDD" id="cd07336">
    <property type="entry name" value="M48B_HtpX_like"/>
    <property type="match status" value="1"/>
</dbReference>
<dbReference type="Gene3D" id="3.30.2010.10">
    <property type="entry name" value="Metalloproteases ('zincins'), catalytic domain"/>
    <property type="match status" value="1"/>
</dbReference>
<dbReference type="HAMAP" id="MF_00188">
    <property type="entry name" value="Pept_M48_protease_HtpX"/>
    <property type="match status" value="1"/>
</dbReference>
<dbReference type="InterPro" id="IPR050083">
    <property type="entry name" value="HtpX_protease"/>
</dbReference>
<dbReference type="InterPro" id="IPR022919">
    <property type="entry name" value="Pept_M48_protease_HtpX"/>
</dbReference>
<dbReference type="InterPro" id="IPR001915">
    <property type="entry name" value="Peptidase_M48"/>
</dbReference>
<dbReference type="NCBIfam" id="NF002363">
    <property type="entry name" value="PRK01345.1"/>
    <property type="match status" value="1"/>
</dbReference>
<dbReference type="NCBIfam" id="NF002826">
    <property type="entry name" value="PRK03001.1"/>
    <property type="match status" value="1"/>
</dbReference>
<dbReference type="PANTHER" id="PTHR43221">
    <property type="entry name" value="PROTEASE HTPX"/>
    <property type="match status" value="1"/>
</dbReference>
<dbReference type="PANTHER" id="PTHR43221:SF1">
    <property type="entry name" value="PROTEASE HTPX"/>
    <property type="match status" value="1"/>
</dbReference>
<dbReference type="Pfam" id="PF01435">
    <property type="entry name" value="Peptidase_M48"/>
    <property type="match status" value="1"/>
</dbReference>
<dbReference type="PROSITE" id="PS00142">
    <property type="entry name" value="ZINC_PROTEASE"/>
    <property type="match status" value="1"/>
</dbReference>
<sequence length="286" mass="30684">MFNWIKTFMLMAAITALFIVIGGMIGGRSGMMLALLFALGMNFFSYWFSDKMVLRMYNAQEVNETSAPQFYRMVQELAGRAGLPMPRVYLIDEAQPNAFATGRNPEHAAVAATTGILNILSERELRGVMAHELAHVQHRDILISTISATMAGAISALANFAVFFGGRDSEGRPANPIAGIAVAILAPLAAAMIQMAISRAREFEADRGGATISGDPQALASALDKIHRYAAGIPFAAAEAHPATAQMMIMNPLHGGGLANLFSTHPATEERIARLMQMAQTGQYPA</sequence>
<proteinExistence type="inferred from homology"/>
<name>HTPX_RALPJ</name>
<evidence type="ECO:0000255" key="1">
    <source>
        <dbReference type="HAMAP-Rule" id="MF_00188"/>
    </source>
</evidence>
<protein>
    <recommendedName>
        <fullName evidence="1">Protease HtpX homolog</fullName>
        <ecNumber evidence="1">3.4.24.-</ecNumber>
    </recommendedName>
</protein>
<reference key="1">
    <citation type="submission" date="2008-05" db="EMBL/GenBank/DDBJ databases">
        <title>Complete sequence of chromosome 1 of Ralstonia pickettii 12J.</title>
        <authorList>
            <person name="Lucas S."/>
            <person name="Copeland A."/>
            <person name="Lapidus A."/>
            <person name="Glavina del Rio T."/>
            <person name="Dalin E."/>
            <person name="Tice H."/>
            <person name="Bruce D."/>
            <person name="Goodwin L."/>
            <person name="Pitluck S."/>
            <person name="Meincke L."/>
            <person name="Brettin T."/>
            <person name="Detter J.C."/>
            <person name="Han C."/>
            <person name="Kuske C.R."/>
            <person name="Schmutz J."/>
            <person name="Larimer F."/>
            <person name="Land M."/>
            <person name="Hauser L."/>
            <person name="Kyrpides N."/>
            <person name="Mikhailova N."/>
            <person name="Marsh T."/>
            <person name="Richardson P."/>
        </authorList>
    </citation>
    <scope>NUCLEOTIDE SEQUENCE [LARGE SCALE GENOMIC DNA]</scope>
    <source>
        <strain>12J</strain>
    </source>
</reference>